<accession>A7MHJ0</accession>
<organism>
    <name type="scientific">Cronobacter sakazakii (strain ATCC BAA-894)</name>
    <name type="common">Enterobacter sakazakii</name>
    <dbReference type="NCBI Taxonomy" id="290339"/>
    <lineage>
        <taxon>Bacteria</taxon>
        <taxon>Pseudomonadati</taxon>
        <taxon>Pseudomonadota</taxon>
        <taxon>Gammaproteobacteria</taxon>
        <taxon>Enterobacterales</taxon>
        <taxon>Enterobacteriaceae</taxon>
        <taxon>Cronobacter</taxon>
    </lineage>
</organism>
<evidence type="ECO:0000255" key="1">
    <source>
        <dbReference type="HAMAP-Rule" id="MF_01424"/>
    </source>
</evidence>
<protein>
    <recommendedName>
        <fullName evidence="1">Multidrug resistance protein MdtC</fullName>
    </recommendedName>
    <alternativeName>
        <fullName evidence="1">Multidrug transporter MdtC</fullName>
    </alternativeName>
</protein>
<name>MDTC_CROS8</name>
<dbReference type="EMBL" id="CP000783">
    <property type="protein sequence ID" value="ABU76409.1"/>
    <property type="molecule type" value="Genomic_DNA"/>
</dbReference>
<dbReference type="RefSeq" id="WP_012124311.1">
    <property type="nucleotide sequence ID" value="NC_009778.1"/>
</dbReference>
<dbReference type="SMR" id="A7MHJ0"/>
<dbReference type="KEGG" id="esa:ESA_01142"/>
<dbReference type="PATRIC" id="fig|290339.8.peg.1012"/>
<dbReference type="HOGENOM" id="CLU_002755_1_2_6"/>
<dbReference type="Proteomes" id="UP000000260">
    <property type="component" value="Chromosome"/>
</dbReference>
<dbReference type="GO" id="GO:0005886">
    <property type="term" value="C:plasma membrane"/>
    <property type="evidence" value="ECO:0007669"/>
    <property type="project" value="UniProtKB-SubCell"/>
</dbReference>
<dbReference type="GO" id="GO:0042910">
    <property type="term" value="F:xenobiotic transmembrane transporter activity"/>
    <property type="evidence" value="ECO:0007669"/>
    <property type="project" value="TreeGrafter"/>
</dbReference>
<dbReference type="FunFam" id="1.20.1640.10:FF:000001">
    <property type="entry name" value="Efflux pump membrane transporter"/>
    <property type="match status" value="1"/>
</dbReference>
<dbReference type="FunFam" id="3.30.70.1430:FF:000001">
    <property type="entry name" value="Efflux pump membrane transporter"/>
    <property type="match status" value="1"/>
</dbReference>
<dbReference type="FunFam" id="3.30.2090.10:FF:000004">
    <property type="entry name" value="Multidrug resistance protein MdtC"/>
    <property type="match status" value="1"/>
</dbReference>
<dbReference type="FunFam" id="3.30.2090.10:FF:000005">
    <property type="entry name" value="Multidrug resistance protein MdtC"/>
    <property type="match status" value="1"/>
</dbReference>
<dbReference type="Gene3D" id="3.30.70.1430">
    <property type="entry name" value="Multidrug efflux transporter AcrB pore domain"/>
    <property type="match status" value="2"/>
</dbReference>
<dbReference type="Gene3D" id="3.30.70.1440">
    <property type="entry name" value="Multidrug efflux transporter AcrB pore domain"/>
    <property type="match status" value="1"/>
</dbReference>
<dbReference type="Gene3D" id="3.30.70.1320">
    <property type="entry name" value="Multidrug efflux transporter AcrB pore domain like"/>
    <property type="match status" value="1"/>
</dbReference>
<dbReference type="Gene3D" id="3.30.2090.10">
    <property type="entry name" value="Multidrug efflux transporter AcrB TolC docking domain, DN and DC subdomains"/>
    <property type="match status" value="2"/>
</dbReference>
<dbReference type="Gene3D" id="1.20.1640.10">
    <property type="entry name" value="Multidrug efflux transporter AcrB transmembrane domain"/>
    <property type="match status" value="2"/>
</dbReference>
<dbReference type="HAMAP" id="MF_01424">
    <property type="entry name" value="MdtC"/>
    <property type="match status" value="1"/>
</dbReference>
<dbReference type="InterPro" id="IPR027463">
    <property type="entry name" value="AcrB_DN_DC_subdom"/>
</dbReference>
<dbReference type="InterPro" id="IPR001036">
    <property type="entry name" value="Acrflvin-R"/>
</dbReference>
<dbReference type="InterPro" id="IPR023931">
    <property type="entry name" value="Multidrug-R_MdtC"/>
</dbReference>
<dbReference type="NCBIfam" id="NF007905">
    <property type="entry name" value="PRK10614.1"/>
    <property type="match status" value="1"/>
</dbReference>
<dbReference type="NCBIfam" id="NF033617">
    <property type="entry name" value="RND_permease_2"/>
    <property type="match status" value="1"/>
</dbReference>
<dbReference type="PANTHER" id="PTHR32063">
    <property type="match status" value="1"/>
</dbReference>
<dbReference type="PANTHER" id="PTHR32063:SF34">
    <property type="entry name" value="MULTIDRUG RESISTANCE PROTEIN MDTC"/>
    <property type="match status" value="1"/>
</dbReference>
<dbReference type="Pfam" id="PF00873">
    <property type="entry name" value="ACR_tran"/>
    <property type="match status" value="1"/>
</dbReference>
<dbReference type="PRINTS" id="PR00702">
    <property type="entry name" value="ACRIFLAVINRP"/>
</dbReference>
<dbReference type="SUPFAM" id="SSF82693">
    <property type="entry name" value="Multidrug efflux transporter AcrB pore domain, PN1, PN2, PC1 and PC2 subdomains"/>
    <property type="match status" value="4"/>
</dbReference>
<dbReference type="SUPFAM" id="SSF82714">
    <property type="entry name" value="Multidrug efflux transporter AcrB TolC docking domain, DN and DC subdomains"/>
    <property type="match status" value="2"/>
</dbReference>
<dbReference type="SUPFAM" id="SSF82866">
    <property type="entry name" value="Multidrug efflux transporter AcrB transmembrane domain"/>
    <property type="match status" value="2"/>
</dbReference>
<reference key="1">
    <citation type="journal article" date="2010" name="PLoS ONE">
        <title>Genome sequence of Cronobacter sakazakii BAA-894 and comparative genomic hybridization analysis with other Cronobacter species.</title>
        <authorList>
            <person name="Kucerova E."/>
            <person name="Clifton S.W."/>
            <person name="Xia X.Q."/>
            <person name="Long F."/>
            <person name="Porwollik S."/>
            <person name="Fulton L."/>
            <person name="Fronick C."/>
            <person name="Minx P."/>
            <person name="Kyung K."/>
            <person name="Warren W."/>
            <person name="Fulton R."/>
            <person name="Feng D."/>
            <person name="Wollam A."/>
            <person name="Shah N."/>
            <person name="Bhonagiri V."/>
            <person name="Nash W.E."/>
            <person name="Hallsworth-Pepin K."/>
            <person name="Wilson R.K."/>
            <person name="McClelland M."/>
            <person name="Forsythe S.J."/>
        </authorList>
    </citation>
    <scope>NUCLEOTIDE SEQUENCE [LARGE SCALE GENOMIC DNA]</scope>
    <source>
        <strain>ATCC BAA-894</strain>
    </source>
</reference>
<comment type="subunit">
    <text evidence="1">Part of a tripartite efflux system composed of MdtA, MdtB and MdtC. MdtC forms a heteromultimer with MdtB.</text>
</comment>
<comment type="subcellular location">
    <subcellularLocation>
        <location evidence="1">Cell inner membrane</location>
        <topology evidence="1">Multi-pass membrane protein</topology>
    </subcellularLocation>
</comment>
<comment type="similarity">
    <text evidence="1">Belongs to the resistance-nodulation-cell division (RND) (TC 2.A.6) family. MdtC subfamily.</text>
</comment>
<gene>
    <name evidence="1" type="primary">mdtC</name>
    <name type="ordered locus">ESA_01142</name>
</gene>
<feature type="chain" id="PRO_1000024313" description="Multidrug resistance protein MdtC">
    <location>
        <begin position="1"/>
        <end position="1029"/>
    </location>
</feature>
<feature type="transmembrane region" description="Helical" evidence="1">
    <location>
        <begin position="15"/>
        <end position="35"/>
    </location>
</feature>
<feature type="transmembrane region" description="Helical" evidence="1">
    <location>
        <begin position="333"/>
        <end position="353"/>
    </location>
</feature>
<feature type="transmembrane region" description="Helical" evidence="1">
    <location>
        <begin position="360"/>
        <end position="380"/>
    </location>
</feature>
<feature type="transmembrane region" description="Helical" evidence="1">
    <location>
        <begin position="387"/>
        <end position="407"/>
    </location>
</feature>
<feature type="transmembrane region" description="Helical" evidence="1">
    <location>
        <begin position="431"/>
        <end position="451"/>
    </location>
</feature>
<feature type="transmembrane region" description="Helical" evidence="1">
    <location>
        <begin position="469"/>
        <end position="489"/>
    </location>
</feature>
<feature type="transmembrane region" description="Helical" evidence="1">
    <location>
        <begin position="528"/>
        <end position="548"/>
    </location>
</feature>
<feature type="transmembrane region" description="Helical" evidence="1">
    <location>
        <begin position="853"/>
        <end position="873"/>
    </location>
</feature>
<feature type="transmembrane region" description="Helical" evidence="1">
    <location>
        <begin position="897"/>
        <end position="917"/>
    </location>
</feature>
<feature type="transmembrane region" description="Helical" evidence="1">
    <location>
        <begin position="953"/>
        <end position="973"/>
    </location>
</feature>
<feature type="transmembrane region" description="Helical" evidence="1">
    <location>
        <begin position="984"/>
        <end position="1004"/>
    </location>
</feature>
<keyword id="KW-0997">Cell inner membrane</keyword>
<keyword id="KW-1003">Cell membrane</keyword>
<keyword id="KW-0472">Membrane</keyword>
<keyword id="KW-1185">Reference proteome</keyword>
<keyword id="KW-0812">Transmembrane</keyword>
<keyword id="KW-1133">Transmembrane helix</keyword>
<keyword id="KW-0813">Transport</keyword>
<sequence>MKFYALFIYRPVATILLSIAVTLCGVLGFRLLPVAPLPQVDFPVIMVSASLPGASPETMASSVATPLERSLGRIAGVNEMTSTSSLGSTRIILEFNFDRDINGAARDVQAAINAAQSLLPSGMPSRPTYRKANPSDAPIMILTLTSDTFSQGELYDYASTQLAQTIAQIDGVGDVDVGGSSLPAVRVALNPQALFNQGVSLDTVRSAISNANVRRPQGAIEDAQRRWQLQTNDELKTAAEYEPLIVHYNNGAAVHLRDVATVTDSVQDVRNAGMTNAKPAILLMIRKLPEANIIETVDRIRAALPELRDTIPAAIDMQIAQDRSPTIRASLAEVEQSLAISVGLVILVVFLFLRSGRATLIPAVAVPVSLIGTFAAMYLCGFSLNNLSLMALTIATGFVVDDAIVALENISRHLEAGVKPLQAALQGVREVGFTVLSMSLSLVAVFLPLLLMGGLPGRLFREFAVTLSVAIGISLVVSLTLTPMMCGWLLKAKPSEETRSRVGINRLLLALQGGYARSLGWVLNHARLVGLVLLATIALNVWLYISIPKTFFPEQDTGRLMGGIQADQSISFQAMRGKLQDFMKIIREDPAVDNVTGFTGGSRVNSGMMFISLKPLGERTESAQQVIDRLRKKLAREPGASLFLMAVQDIRVGGRQSNASYQYTLLSDDLAALREWEPKIRQALAKLPQLADVNSDQQDNGAEMSLVYDRESMARLGISVQDANSLLNNAFGQRQISTIYQPLNQYKVVMEVDPRYTQDISALDQMFVMNSEGKPIPLSWFAKWQPANAPLSVNHQGLSAASTIAFNLPTGVSLSEASDAITRTMTSLGVPSSVRGSFAGTAQVFQETMNSQVILILAAIATVYIVLGMLYESYVHPLTILSTLPSAGVGALLALEAFDAPFSLIALIGIMLLIGIVKKNAIMMVDFALEAQRSGQLSARDAIFQACLLRFRPIMMTTLAALFGALPLMIASGDGAELRQPLGITIVGGLVMSQLLTLYTTPVVYLFFDRLRLRFTRRAKPEDTLTASE</sequence>
<proteinExistence type="inferred from homology"/>